<gene>
    <name type="primary">mutS</name>
    <name type="ordered locus">CPn_0941</name>
    <name type="ordered locus">CP_0920</name>
    <name type="ordered locus">CpB0975</name>
</gene>
<reference key="1">
    <citation type="journal article" date="1999" name="Nat. Genet.">
        <title>Comparative genomes of Chlamydia pneumoniae and C. trachomatis.</title>
        <authorList>
            <person name="Kalman S."/>
            <person name="Mitchell W.P."/>
            <person name="Marathe R."/>
            <person name="Lammel C.J."/>
            <person name="Fan J."/>
            <person name="Hyman R.W."/>
            <person name="Olinger L."/>
            <person name="Grimwood J."/>
            <person name="Davis R.W."/>
            <person name="Stephens R.S."/>
        </authorList>
    </citation>
    <scope>NUCLEOTIDE SEQUENCE [LARGE SCALE GENOMIC DNA]</scope>
    <source>
        <strain>CWL029</strain>
    </source>
</reference>
<reference key="2">
    <citation type="journal article" date="2000" name="Nucleic Acids Res.">
        <title>Genome sequences of Chlamydia trachomatis MoPn and Chlamydia pneumoniae AR39.</title>
        <authorList>
            <person name="Read T.D."/>
            <person name="Brunham R.C."/>
            <person name="Shen C."/>
            <person name="Gill S.R."/>
            <person name="Heidelberg J.F."/>
            <person name="White O."/>
            <person name="Hickey E.K."/>
            <person name="Peterson J.D."/>
            <person name="Utterback T.R."/>
            <person name="Berry K.J."/>
            <person name="Bass S."/>
            <person name="Linher K.D."/>
            <person name="Weidman J.F."/>
            <person name="Khouri H.M."/>
            <person name="Craven B."/>
            <person name="Bowman C."/>
            <person name="Dodson R.J."/>
            <person name="Gwinn M.L."/>
            <person name="Nelson W.C."/>
            <person name="DeBoy R.T."/>
            <person name="Kolonay J.F."/>
            <person name="McClarty G."/>
            <person name="Salzberg S.L."/>
            <person name="Eisen J.A."/>
            <person name="Fraser C.M."/>
        </authorList>
    </citation>
    <scope>NUCLEOTIDE SEQUENCE [LARGE SCALE GENOMIC DNA]</scope>
    <source>
        <strain>AR39</strain>
    </source>
</reference>
<reference key="3">
    <citation type="journal article" date="2000" name="Nucleic Acids Res.">
        <title>Comparison of whole genome sequences of Chlamydia pneumoniae J138 from Japan and CWL029 from USA.</title>
        <authorList>
            <person name="Shirai M."/>
            <person name="Hirakawa H."/>
            <person name="Kimoto M."/>
            <person name="Tabuchi M."/>
            <person name="Kishi F."/>
            <person name="Ouchi K."/>
            <person name="Shiba T."/>
            <person name="Ishii K."/>
            <person name="Hattori M."/>
            <person name="Kuhara S."/>
            <person name="Nakazawa T."/>
        </authorList>
    </citation>
    <scope>NUCLEOTIDE SEQUENCE [LARGE SCALE GENOMIC DNA]</scope>
    <source>
        <strain>J138</strain>
    </source>
</reference>
<reference key="4">
    <citation type="submission" date="2002-05" db="EMBL/GenBank/DDBJ databases">
        <title>The genome sequence of Chlamydia pneumoniae TW183 and comparison with other Chlamydia strains based on whole genome sequence analysis.</title>
        <authorList>
            <person name="Geng M.M."/>
            <person name="Schuhmacher A."/>
            <person name="Muehldorfer I."/>
            <person name="Bensch K.W."/>
            <person name="Schaefer K.P."/>
            <person name="Schneider S."/>
            <person name="Pohl T."/>
            <person name="Essig A."/>
            <person name="Marre R."/>
            <person name="Melchers K."/>
        </authorList>
    </citation>
    <scope>NUCLEOTIDE SEQUENCE [LARGE SCALE GENOMIC DNA]</scope>
    <source>
        <strain>TW-183</strain>
    </source>
</reference>
<evidence type="ECO:0000250" key="1"/>
<evidence type="ECO:0000255" key="2"/>
<evidence type="ECO:0000305" key="3"/>
<sequence length="828" mass="93211">MTEKKPTPMMEQWHQCKEKAGDSVLLFRMGDFYEAFYDDAVLLSQHLELTLTQRQGIPMSGIPVSTVDTYVDRLIGKGFKVAVAEQFGEPAKEKESKKIGPMARDIQRFVTPGTLLSSTLLQEKFNNYIVAINRIGSLFGFACLDLSTGSFFIEECENTKELVDEICRLAPSEVLSCNKFYNKETAIVMQLQQHLKLTLSTYADWAFEHKFASQKLTTHFQVASLDGFGLKGLVPAINAAGGLLSYIQDKLLLPTKHIAIPQTRGKQQKLLIDTASQVNLELLAPLNDPQGKNSLLRIMDHTSTPMGGRLLRQILISPFYNPKEILVRQDAVEFFLRQVTLRKNIKTYLCQVRDIERLMTKVTTGLAGPRDIGTLRDSFSAGAQIYEQLASATLPEFFIDKCSLDTKLASLIALLSKSLNGDLPLRVSDGNIFVDEFHNDLKRLRHNQEHSQEWIWEYQERIRKETGIKKLKICFAQALGYYIEVSSEFAPQLPKDFIRRQSRLHAERFTTIELQQFQDDMSNISEKLQTLETQFFKDLCSHILQLRTEILALSQSLADLDYIISLADLAHAQGYCRPRVDMSDTLCIYRGCHPVAKTLVDTGKFIPNDTEMRGSQTRMILLTGPNMAGKSTYIRQIALLVIMAQMGSYIPAKSAHIGVIDKIFTRIGAGDNLSKGMSTFMVEMAETANILHNATDRSLVILDEVGRGTSTYDGLAIAQAVVEYLLFTDKKKAKTLFATHYKELTTLEDHCPHVENFHAGVKDKAGQPVFLYEILKGHSQKSFGIHVARLAGFPLCVVSRAQQILRQLEGPESITRPAQDKMQQLTLF</sequence>
<name>MUTS_CHLPN</name>
<dbReference type="EMBL" id="AE001363">
    <property type="protein sequence ID" value="AAD19079.1"/>
    <property type="molecule type" value="Genomic_DNA"/>
</dbReference>
<dbReference type="EMBL" id="AE002161">
    <property type="protein sequence ID" value="AAF38705.1"/>
    <property type="molecule type" value="Genomic_DNA"/>
</dbReference>
<dbReference type="EMBL" id="BA000008">
    <property type="protein sequence ID" value="BAA99149.1"/>
    <property type="molecule type" value="Genomic_DNA"/>
</dbReference>
<dbReference type="EMBL" id="AE009440">
    <property type="protein sequence ID" value="AAP98904.1"/>
    <property type="molecule type" value="Genomic_DNA"/>
</dbReference>
<dbReference type="PIR" id="C86608">
    <property type="entry name" value="C86608"/>
</dbReference>
<dbReference type="PIR" id="D81522">
    <property type="entry name" value="D81522"/>
</dbReference>
<dbReference type="PIR" id="G72017">
    <property type="entry name" value="G72017"/>
</dbReference>
<dbReference type="RefSeq" id="NP_225136.1">
    <property type="nucleotide sequence ID" value="NC_000922.1"/>
</dbReference>
<dbReference type="RefSeq" id="WP_010883576.1">
    <property type="nucleotide sequence ID" value="NZ_LN847257.1"/>
</dbReference>
<dbReference type="RefSeq" id="WP_010892221.1">
    <property type="nucleotide sequence ID" value="NZ_LN846995.1"/>
</dbReference>
<dbReference type="SMR" id="Q9Z6W5"/>
<dbReference type="STRING" id="406984.CPK_ORF00354"/>
<dbReference type="GeneID" id="45050997"/>
<dbReference type="KEGG" id="cpa:CP_0920"/>
<dbReference type="KEGG" id="cpj:mutS"/>
<dbReference type="KEGG" id="cpn:CPn_0941"/>
<dbReference type="KEGG" id="cpt:CpB0975"/>
<dbReference type="PATRIC" id="fig|115713.3.peg.1029"/>
<dbReference type="eggNOG" id="COG0249">
    <property type="taxonomic scope" value="Bacteria"/>
</dbReference>
<dbReference type="HOGENOM" id="CLU_002472_4_0_0"/>
<dbReference type="OrthoDB" id="9802448at2"/>
<dbReference type="Proteomes" id="UP000000583">
    <property type="component" value="Chromosome"/>
</dbReference>
<dbReference type="Proteomes" id="UP000000801">
    <property type="component" value="Chromosome"/>
</dbReference>
<dbReference type="GO" id="GO:0005829">
    <property type="term" value="C:cytosol"/>
    <property type="evidence" value="ECO:0007669"/>
    <property type="project" value="TreeGrafter"/>
</dbReference>
<dbReference type="GO" id="GO:0005524">
    <property type="term" value="F:ATP binding"/>
    <property type="evidence" value="ECO:0007669"/>
    <property type="project" value="UniProtKB-UniRule"/>
</dbReference>
<dbReference type="GO" id="GO:0140664">
    <property type="term" value="F:ATP-dependent DNA damage sensor activity"/>
    <property type="evidence" value="ECO:0007669"/>
    <property type="project" value="InterPro"/>
</dbReference>
<dbReference type="GO" id="GO:0003684">
    <property type="term" value="F:damaged DNA binding"/>
    <property type="evidence" value="ECO:0007669"/>
    <property type="project" value="UniProtKB-UniRule"/>
</dbReference>
<dbReference type="GO" id="GO:0030983">
    <property type="term" value="F:mismatched DNA binding"/>
    <property type="evidence" value="ECO:0007669"/>
    <property type="project" value="InterPro"/>
</dbReference>
<dbReference type="GO" id="GO:0006298">
    <property type="term" value="P:mismatch repair"/>
    <property type="evidence" value="ECO:0007669"/>
    <property type="project" value="UniProtKB-UniRule"/>
</dbReference>
<dbReference type="CDD" id="cd03284">
    <property type="entry name" value="ABC_MutS1"/>
    <property type="match status" value="1"/>
</dbReference>
<dbReference type="FunFam" id="3.40.50.300:FF:002842">
    <property type="entry name" value="DNA mismatch repair protein MutS"/>
    <property type="match status" value="1"/>
</dbReference>
<dbReference type="Gene3D" id="1.10.1420.10">
    <property type="match status" value="2"/>
</dbReference>
<dbReference type="Gene3D" id="3.40.1170.10">
    <property type="entry name" value="DNA repair protein MutS, domain I"/>
    <property type="match status" value="1"/>
</dbReference>
<dbReference type="Gene3D" id="3.30.420.110">
    <property type="entry name" value="MutS, connector domain"/>
    <property type="match status" value="1"/>
</dbReference>
<dbReference type="Gene3D" id="3.40.50.300">
    <property type="entry name" value="P-loop containing nucleotide triphosphate hydrolases"/>
    <property type="match status" value="1"/>
</dbReference>
<dbReference type="HAMAP" id="MF_00096">
    <property type="entry name" value="MutS"/>
    <property type="match status" value="1"/>
</dbReference>
<dbReference type="InterPro" id="IPR005748">
    <property type="entry name" value="DNA_mismatch_repair_MutS"/>
</dbReference>
<dbReference type="InterPro" id="IPR007695">
    <property type="entry name" value="DNA_mismatch_repair_MutS-lik_N"/>
</dbReference>
<dbReference type="InterPro" id="IPR017261">
    <property type="entry name" value="DNA_mismatch_repair_MutS/MSH"/>
</dbReference>
<dbReference type="InterPro" id="IPR000432">
    <property type="entry name" value="DNA_mismatch_repair_MutS_C"/>
</dbReference>
<dbReference type="InterPro" id="IPR007861">
    <property type="entry name" value="DNA_mismatch_repair_MutS_clamp"/>
</dbReference>
<dbReference type="InterPro" id="IPR007696">
    <property type="entry name" value="DNA_mismatch_repair_MutS_core"/>
</dbReference>
<dbReference type="InterPro" id="IPR016151">
    <property type="entry name" value="DNA_mismatch_repair_MutS_N"/>
</dbReference>
<dbReference type="InterPro" id="IPR036187">
    <property type="entry name" value="DNA_mismatch_repair_MutS_sf"/>
</dbReference>
<dbReference type="InterPro" id="IPR007860">
    <property type="entry name" value="DNA_mmatch_repair_MutS_con_dom"/>
</dbReference>
<dbReference type="InterPro" id="IPR045076">
    <property type="entry name" value="MutS"/>
</dbReference>
<dbReference type="InterPro" id="IPR036678">
    <property type="entry name" value="MutS_con_dom_sf"/>
</dbReference>
<dbReference type="InterPro" id="IPR027417">
    <property type="entry name" value="P-loop_NTPase"/>
</dbReference>
<dbReference type="NCBIfam" id="TIGR01070">
    <property type="entry name" value="mutS1"/>
    <property type="match status" value="1"/>
</dbReference>
<dbReference type="NCBIfam" id="NF003810">
    <property type="entry name" value="PRK05399.1"/>
    <property type="match status" value="1"/>
</dbReference>
<dbReference type="PANTHER" id="PTHR11361:SF34">
    <property type="entry name" value="DNA MISMATCH REPAIR PROTEIN MSH1, MITOCHONDRIAL"/>
    <property type="match status" value="1"/>
</dbReference>
<dbReference type="PANTHER" id="PTHR11361">
    <property type="entry name" value="DNA MISMATCH REPAIR PROTEIN MUTS FAMILY MEMBER"/>
    <property type="match status" value="1"/>
</dbReference>
<dbReference type="Pfam" id="PF01624">
    <property type="entry name" value="MutS_I"/>
    <property type="match status" value="1"/>
</dbReference>
<dbReference type="Pfam" id="PF05188">
    <property type="entry name" value="MutS_II"/>
    <property type="match status" value="1"/>
</dbReference>
<dbReference type="Pfam" id="PF05192">
    <property type="entry name" value="MutS_III"/>
    <property type="match status" value="1"/>
</dbReference>
<dbReference type="Pfam" id="PF05190">
    <property type="entry name" value="MutS_IV"/>
    <property type="match status" value="1"/>
</dbReference>
<dbReference type="Pfam" id="PF00488">
    <property type="entry name" value="MutS_V"/>
    <property type="match status" value="1"/>
</dbReference>
<dbReference type="PIRSF" id="PIRSF037677">
    <property type="entry name" value="DNA_mis_repair_Msh6"/>
    <property type="match status" value="1"/>
</dbReference>
<dbReference type="SMART" id="SM00534">
    <property type="entry name" value="MUTSac"/>
    <property type="match status" value="1"/>
</dbReference>
<dbReference type="SMART" id="SM00533">
    <property type="entry name" value="MUTSd"/>
    <property type="match status" value="1"/>
</dbReference>
<dbReference type="SUPFAM" id="SSF55271">
    <property type="entry name" value="DNA repair protein MutS, domain I"/>
    <property type="match status" value="1"/>
</dbReference>
<dbReference type="SUPFAM" id="SSF53150">
    <property type="entry name" value="DNA repair protein MutS, domain II"/>
    <property type="match status" value="1"/>
</dbReference>
<dbReference type="SUPFAM" id="SSF48334">
    <property type="entry name" value="DNA repair protein MutS, domain III"/>
    <property type="match status" value="1"/>
</dbReference>
<dbReference type="SUPFAM" id="SSF52540">
    <property type="entry name" value="P-loop containing nucleoside triphosphate hydrolases"/>
    <property type="match status" value="1"/>
</dbReference>
<dbReference type="PROSITE" id="PS00486">
    <property type="entry name" value="DNA_MISMATCH_REPAIR_2"/>
    <property type="match status" value="1"/>
</dbReference>
<keyword id="KW-0067">ATP-binding</keyword>
<keyword id="KW-0227">DNA damage</keyword>
<keyword id="KW-0234">DNA repair</keyword>
<keyword id="KW-0238">DNA-binding</keyword>
<keyword id="KW-0547">Nucleotide-binding</keyword>
<protein>
    <recommendedName>
        <fullName>DNA mismatch repair protein MutS</fullName>
    </recommendedName>
</protein>
<feature type="chain" id="PRO_0000115085" description="DNA mismatch repair protein MutS">
    <location>
        <begin position="1"/>
        <end position="828"/>
    </location>
</feature>
<feature type="binding site" evidence="2">
    <location>
        <begin position="624"/>
        <end position="631"/>
    </location>
    <ligand>
        <name>ATP</name>
        <dbReference type="ChEBI" id="CHEBI:30616"/>
    </ligand>
</feature>
<feature type="sequence conflict" description="In Ref. 1; AAD19079." evidence="3" ref="1">
    <original>R</original>
    <variation>H</variation>
    <location>
        <position position="579"/>
    </location>
</feature>
<comment type="function">
    <text evidence="1">This protein is involved in the repair of mismatches in DNA. It is possible that it carries out the mismatch recognition step. This protein has a weak ATPase activity (By similarity).</text>
</comment>
<comment type="similarity">
    <text evidence="3">Belongs to the DNA mismatch repair MutS family.</text>
</comment>
<proteinExistence type="inferred from homology"/>
<accession>Q9Z6W5</accession>
<accession>Q9JS56</accession>
<organism>
    <name type="scientific">Chlamydia pneumoniae</name>
    <name type="common">Chlamydophila pneumoniae</name>
    <dbReference type="NCBI Taxonomy" id="83558"/>
    <lineage>
        <taxon>Bacteria</taxon>
        <taxon>Pseudomonadati</taxon>
        <taxon>Chlamydiota</taxon>
        <taxon>Chlamydiia</taxon>
        <taxon>Chlamydiales</taxon>
        <taxon>Chlamydiaceae</taxon>
        <taxon>Chlamydia/Chlamydophila group</taxon>
        <taxon>Chlamydia</taxon>
    </lineage>
</organism>